<accession>Q819S3</accession>
<feature type="chain" id="PRO_1000066339" description="Carbamoyl phosphate synthase large chain">
    <location>
        <begin position="1"/>
        <end position="1072"/>
    </location>
</feature>
<feature type="domain" description="ATP-grasp 1" evidence="1">
    <location>
        <begin position="133"/>
        <end position="327"/>
    </location>
</feature>
<feature type="domain" description="ATP-grasp 2" evidence="1">
    <location>
        <begin position="671"/>
        <end position="861"/>
    </location>
</feature>
<feature type="domain" description="MGS-like" evidence="1">
    <location>
        <begin position="930"/>
        <end position="1072"/>
    </location>
</feature>
<feature type="region of interest" description="Carboxyphosphate synthetic domain" evidence="1">
    <location>
        <begin position="1"/>
        <end position="401"/>
    </location>
</feature>
<feature type="region of interest" description="Oligomerization domain" evidence="1">
    <location>
        <begin position="402"/>
        <end position="546"/>
    </location>
</feature>
<feature type="region of interest" description="Carbamoyl phosphate synthetic domain" evidence="1">
    <location>
        <begin position="547"/>
        <end position="929"/>
    </location>
</feature>
<feature type="region of interest" description="Allosteric domain" evidence="1">
    <location>
        <begin position="930"/>
        <end position="1072"/>
    </location>
</feature>
<feature type="binding site" evidence="1">
    <location>
        <position position="129"/>
    </location>
    <ligand>
        <name>ATP</name>
        <dbReference type="ChEBI" id="CHEBI:30616"/>
        <label>1</label>
    </ligand>
</feature>
<feature type="binding site" evidence="1">
    <location>
        <position position="169"/>
    </location>
    <ligand>
        <name>ATP</name>
        <dbReference type="ChEBI" id="CHEBI:30616"/>
        <label>1</label>
    </ligand>
</feature>
<feature type="binding site" evidence="1">
    <location>
        <position position="175"/>
    </location>
    <ligand>
        <name>ATP</name>
        <dbReference type="ChEBI" id="CHEBI:30616"/>
        <label>1</label>
    </ligand>
</feature>
<feature type="binding site" evidence="1">
    <location>
        <position position="176"/>
    </location>
    <ligand>
        <name>ATP</name>
        <dbReference type="ChEBI" id="CHEBI:30616"/>
        <label>1</label>
    </ligand>
</feature>
<feature type="binding site" evidence="1">
    <location>
        <position position="208"/>
    </location>
    <ligand>
        <name>ATP</name>
        <dbReference type="ChEBI" id="CHEBI:30616"/>
        <label>1</label>
    </ligand>
</feature>
<feature type="binding site" evidence="1">
    <location>
        <position position="210"/>
    </location>
    <ligand>
        <name>ATP</name>
        <dbReference type="ChEBI" id="CHEBI:30616"/>
        <label>1</label>
    </ligand>
</feature>
<feature type="binding site" evidence="1">
    <location>
        <position position="215"/>
    </location>
    <ligand>
        <name>ATP</name>
        <dbReference type="ChEBI" id="CHEBI:30616"/>
        <label>1</label>
    </ligand>
</feature>
<feature type="binding site" evidence="1">
    <location>
        <position position="241"/>
    </location>
    <ligand>
        <name>ATP</name>
        <dbReference type="ChEBI" id="CHEBI:30616"/>
        <label>1</label>
    </ligand>
</feature>
<feature type="binding site" evidence="1">
    <location>
        <position position="242"/>
    </location>
    <ligand>
        <name>ATP</name>
        <dbReference type="ChEBI" id="CHEBI:30616"/>
        <label>1</label>
    </ligand>
</feature>
<feature type="binding site" evidence="1">
    <location>
        <position position="243"/>
    </location>
    <ligand>
        <name>ATP</name>
        <dbReference type="ChEBI" id="CHEBI:30616"/>
        <label>1</label>
    </ligand>
</feature>
<feature type="binding site" evidence="1">
    <location>
        <position position="284"/>
    </location>
    <ligand>
        <name>ATP</name>
        <dbReference type="ChEBI" id="CHEBI:30616"/>
        <label>1</label>
    </ligand>
</feature>
<feature type="binding site" evidence="1">
    <location>
        <position position="284"/>
    </location>
    <ligand>
        <name>Mg(2+)</name>
        <dbReference type="ChEBI" id="CHEBI:18420"/>
        <label>1</label>
    </ligand>
</feature>
<feature type="binding site" evidence="1">
    <location>
        <position position="284"/>
    </location>
    <ligand>
        <name>Mn(2+)</name>
        <dbReference type="ChEBI" id="CHEBI:29035"/>
        <label>1</label>
    </ligand>
</feature>
<feature type="binding site" evidence="1">
    <location>
        <position position="298"/>
    </location>
    <ligand>
        <name>ATP</name>
        <dbReference type="ChEBI" id="CHEBI:30616"/>
        <label>1</label>
    </ligand>
</feature>
<feature type="binding site" evidence="1">
    <location>
        <position position="298"/>
    </location>
    <ligand>
        <name>Mg(2+)</name>
        <dbReference type="ChEBI" id="CHEBI:18420"/>
        <label>1</label>
    </ligand>
</feature>
<feature type="binding site" evidence="1">
    <location>
        <position position="298"/>
    </location>
    <ligand>
        <name>Mg(2+)</name>
        <dbReference type="ChEBI" id="CHEBI:18420"/>
        <label>2</label>
    </ligand>
</feature>
<feature type="binding site" evidence="1">
    <location>
        <position position="298"/>
    </location>
    <ligand>
        <name>Mn(2+)</name>
        <dbReference type="ChEBI" id="CHEBI:29035"/>
        <label>1</label>
    </ligand>
</feature>
<feature type="binding site" evidence="1">
    <location>
        <position position="298"/>
    </location>
    <ligand>
        <name>Mn(2+)</name>
        <dbReference type="ChEBI" id="CHEBI:29035"/>
        <label>2</label>
    </ligand>
</feature>
<feature type="binding site" evidence="1">
    <location>
        <position position="300"/>
    </location>
    <ligand>
        <name>Mg(2+)</name>
        <dbReference type="ChEBI" id="CHEBI:18420"/>
        <label>2</label>
    </ligand>
</feature>
<feature type="binding site" evidence="1">
    <location>
        <position position="300"/>
    </location>
    <ligand>
        <name>Mn(2+)</name>
        <dbReference type="ChEBI" id="CHEBI:29035"/>
        <label>2</label>
    </ligand>
</feature>
<feature type="binding site" evidence="1">
    <location>
        <position position="707"/>
    </location>
    <ligand>
        <name>ATP</name>
        <dbReference type="ChEBI" id="CHEBI:30616"/>
        <label>2</label>
    </ligand>
</feature>
<feature type="binding site" evidence="1">
    <location>
        <position position="746"/>
    </location>
    <ligand>
        <name>ATP</name>
        <dbReference type="ChEBI" id="CHEBI:30616"/>
        <label>2</label>
    </ligand>
</feature>
<feature type="binding site" evidence="1">
    <location>
        <position position="752"/>
    </location>
    <ligand>
        <name>ATP</name>
        <dbReference type="ChEBI" id="CHEBI:30616"/>
        <label>2</label>
    </ligand>
</feature>
<feature type="binding site" evidence="1">
    <location>
        <position position="777"/>
    </location>
    <ligand>
        <name>ATP</name>
        <dbReference type="ChEBI" id="CHEBI:30616"/>
        <label>2</label>
    </ligand>
</feature>
<feature type="binding site" evidence="1">
    <location>
        <position position="778"/>
    </location>
    <ligand>
        <name>ATP</name>
        <dbReference type="ChEBI" id="CHEBI:30616"/>
        <label>2</label>
    </ligand>
</feature>
<feature type="binding site" evidence="1">
    <location>
        <position position="779"/>
    </location>
    <ligand>
        <name>ATP</name>
        <dbReference type="ChEBI" id="CHEBI:30616"/>
        <label>2</label>
    </ligand>
</feature>
<feature type="binding site" evidence="1">
    <location>
        <position position="780"/>
    </location>
    <ligand>
        <name>ATP</name>
        <dbReference type="ChEBI" id="CHEBI:30616"/>
        <label>2</label>
    </ligand>
</feature>
<feature type="binding site" evidence="1">
    <location>
        <position position="820"/>
    </location>
    <ligand>
        <name>ATP</name>
        <dbReference type="ChEBI" id="CHEBI:30616"/>
        <label>2</label>
    </ligand>
</feature>
<feature type="binding site" evidence="1">
    <location>
        <position position="820"/>
    </location>
    <ligand>
        <name>Mg(2+)</name>
        <dbReference type="ChEBI" id="CHEBI:18420"/>
        <label>3</label>
    </ligand>
</feature>
<feature type="binding site" evidence="1">
    <location>
        <position position="820"/>
    </location>
    <ligand>
        <name>Mn(2+)</name>
        <dbReference type="ChEBI" id="CHEBI:29035"/>
        <label>3</label>
    </ligand>
</feature>
<feature type="binding site" evidence="1">
    <location>
        <position position="832"/>
    </location>
    <ligand>
        <name>ATP</name>
        <dbReference type="ChEBI" id="CHEBI:30616"/>
        <label>2</label>
    </ligand>
</feature>
<feature type="binding site" evidence="1">
    <location>
        <position position="832"/>
    </location>
    <ligand>
        <name>Mg(2+)</name>
        <dbReference type="ChEBI" id="CHEBI:18420"/>
        <label>3</label>
    </ligand>
</feature>
<feature type="binding site" evidence="1">
    <location>
        <position position="832"/>
    </location>
    <ligand>
        <name>Mg(2+)</name>
        <dbReference type="ChEBI" id="CHEBI:18420"/>
        <label>4</label>
    </ligand>
</feature>
<feature type="binding site" evidence="1">
    <location>
        <position position="832"/>
    </location>
    <ligand>
        <name>Mn(2+)</name>
        <dbReference type="ChEBI" id="CHEBI:29035"/>
        <label>3</label>
    </ligand>
</feature>
<feature type="binding site" evidence="1">
    <location>
        <position position="832"/>
    </location>
    <ligand>
        <name>Mn(2+)</name>
        <dbReference type="ChEBI" id="CHEBI:29035"/>
        <label>4</label>
    </ligand>
</feature>
<feature type="binding site" evidence="1">
    <location>
        <position position="834"/>
    </location>
    <ligand>
        <name>Mg(2+)</name>
        <dbReference type="ChEBI" id="CHEBI:18420"/>
        <label>4</label>
    </ligand>
</feature>
<feature type="binding site" evidence="1">
    <location>
        <position position="834"/>
    </location>
    <ligand>
        <name>Mn(2+)</name>
        <dbReference type="ChEBI" id="CHEBI:29035"/>
        <label>4</label>
    </ligand>
</feature>
<reference key="1">
    <citation type="journal article" date="2003" name="Nature">
        <title>Genome sequence of Bacillus cereus and comparative analysis with Bacillus anthracis.</title>
        <authorList>
            <person name="Ivanova N."/>
            <person name="Sorokin A."/>
            <person name="Anderson I."/>
            <person name="Galleron N."/>
            <person name="Candelon B."/>
            <person name="Kapatral V."/>
            <person name="Bhattacharyya A."/>
            <person name="Reznik G."/>
            <person name="Mikhailova N."/>
            <person name="Lapidus A."/>
            <person name="Chu L."/>
            <person name="Mazur M."/>
            <person name="Goltsman E."/>
            <person name="Larsen N."/>
            <person name="D'Souza M."/>
            <person name="Walunas T."/>
            <person name="Grechkin Y."/>
            <person name="Pusch G."/>
            <person name="Haselkorn R."/>
            <person name="Fonstein M."/>
            <person name="Ehrlich S.D."/>
            <person name="Overbeek R."/>
            <person name="Kyrpides N.C."/>
        </authorList>
    </citation>
    <scope>NUCLEOTIDE SEQUENCE [LARGE SCALE GENOMIC DNA]</scope>
    <source>
        <strain>ATCC 14579 / DSM 31 / CCUG 7414 / JCM 2152 / NBRC 15305 / NCIMB 9373 / NCTC 2599 / NRRL B-3711</strain>
    </source>
</reference>
<keyword id="KW-0028">Amino-acid biosynthesis</keyword>
<keyword id="KW-0055">Arginine biosynthesis</keyword>
<keyword id="KW-0067">ATP-binding</keyword>
<keyword id="KW-0436">Ligase</keyword>
<keyword id="KW-0460">Magnesium</keyword>
<keyword id="KW-0464">Manganese</keyword>
<keyword id="KW-0479">Metal-binding</keyword>
<keyword id="KW-0547">Nucleotide-binding</keyword>
<keyword id="KW-0665">Pyrimidine biosynthesis</keyword>
<keyword id="KW-1185">Reference proteome</keyword>
<keyword id="KW-0677">Repeat</keyword>
<gene>
    <name evidence="1" type="primary">carB</name>
    <name type="ordered locus">BC_3886</name>
</gene>
<evidence type="ECO:0000255" key="1">
    <source>
        <dbReference type="HAMAP-Rule" id="MF_01210"/>
    </source>
</evidence>
<name>CARB_BACCR</name>
<sequence length="1072" mass="118668">MPKRLDINTILVIGSGPIVIGQAAEFDYSGTQACQSLKEEGYKVILVNSNPATIMTDTATADKVYIEPLTLEFVSRIIRKERPDAILPTLGGQTGLNMAVELAKSGVLDECGVEILGTKLSAIEQAEDRDLFRTLMQDLNEPTPPSEIIHNLDEAYGFVNEIGYPVIVRPAFTLGGTGGGICHNEEELIEIVTSGLKHSPVTQCLLEKSIAGCKEIEYEVMRDSNDNAIVVCNMENIDPVGVHTGDSIVVAPSQTLSDREYQMLRNTSLRIIRALGIEGGCNVQLALDPYSFQYYVIEVNPRVSRSSALASKATGYPIAKLAAKIAVGLTLDEIVNPVTQKTYACFEPALDYVVSKIPRWPFDKFESANRTLGTQMKATGEVMSIGRNLEESLLKAVRSLELGIYHLELDHLKELDKETMKKRIIKADDERLFIVAEAIRQGVTKEEINEWCEMDFFFLQKVENIVNMEREVKANVGNMEVLQTAKEMGFSDHYIAAAWNKTEREIYDMRKENNMMPVFKMVDTCAAEFESATPYYYSTYADENESIVTDRKSVVVLGSGPIRIGQGVEFDYATVHSVWAIKEAGYEAIIINNNPETVSTDFSISDKLYFEPLTIEDVMHIIDLEKPEGVIVQFGGQTAINLAAKLEEHGVKILGTSLEDLDRAEDRDKFEAALTKLGIPQPVGKTATTVEQAVAIAEEIGYPVLVRPSYVLGGRAMEIVYRQEELLHYMKNAVKVHADHPVLIDRYMVGKEIEVDAISDGENVFIPGIMEHIERAGVHSGDSIGVYPPQSLSEKLKEQIIEHTIALGKGLNIVGLLNIQFVVFKDQVYVIEVNPRASRTVPFLSKITGVPMANVATKVILGQDLVEQGYGTGYHPEEKEVYVKAPVFSFAKLRSVDTTLGPEMKSTGEVMGKDLTLEKALYKGLVASGINIPTHGSVIITVADKDKEEAMEIAKRFHEIGYNLLATAGTAQSLEEQNIPVQVVNKIDSEDYNLLDIIRQGKAQFVINTLTKGKQPARDGFRIRRESVENGVACLTSLDTTRAILRVLESMTFSAHSMKEITQTKRHEVVHA</sequence>
<dbReference type="EC" id="6.3.4.16" evidence="1"/>
<dbReference type="EC" id="6.3.5.5" evidence="1"/>
<dbReference type="EMBL" id="AE016877">
    <property type="protein sequence ID" value="AAP10807.1"/>
    <property type="molecule type" value="Genomic_DNA"/>
</dbReference>
<dbReference type="RefSeq" id="NP_833606.1">
    <property type="nucleotide sequence ID" value="NC_004722.1"/>
</dbReference>
<dbReference type="RefSeq" id="WP_001126101.1">
    <property type="nucleotide sequence ID" value="NZ_CP138336.1"/>
</dbReference>
<dbReference type="SMR" id="Q819S3"/>
<dbReference type="STRING" id="226900.BC_3886"/>
<dbReference type="MetOSite" id="Q819S3"/>
<dbReference type="KEGG" id="bce:BC3886"/>
<dbReference type="PATRIC" id="fig|226900.8.peg.4008"/>
<dbReference type="HOGENOM" id="CLU_000513_1_3_9"/>
<dbReference type="OrthoDB" id="9804197at2"/>
<dbReference type="UniPathway" id="UPA00068">
    <property type="reaction ID" value="UER00171"/>
</dbReference>
<dbReference type="UniPathway" id="UPA00070">
    <property type="reaction ID" value="UER00115"/>
</dbReference>
<dbReference type="Proteomes" id="UP000001417">
    <property type="component" value="Chromosome"/>
</dbReference>
<dbReference type="GO" id="GO:0005737">
    <property type="term" value="C:cytoplasm"/>
    <property type="evidence" value="ECO:0000318"/>
    <property type="project" value="GO_Central"/>
</dbReference>
<dbReference type="GO" id="GO:0005524">
    <property type="term" value="F:ATP binding"/>
    <property type="evidence" value="ECO:0007669"/>
    <property type="project" value="UniProtKB-UniRule"/>
</dbReference>
<dbReference type="GO" id="GO:0004087">
    <property type="term" value="F:carbamoyl-phosphate synthase (ammonia) activity"/>
    <property type="evidence" value="ECO:0007669"/>
    <property type="project" value="RHEA"/>
</dbReference>
<dbReference type="GO" id="GO:0004088">
    <property type="term" value="F:carbamoyl-phosphate synthase (glutamine-hydrolyzing) activity"/>
    <property type="evidence" value="ECO:0007669"/>
    <property type="project" value="UniProtKB-UniRule"/>
</dbReference>
<dbReference type="GO" id="GO:0046872">
    <property type="term" value="F:metal ion binding"/>
    <property type="evidence" value="ECO:0007669"/>
    <property type="project" value="UniProtKB-KW"/>
</dbReference>
<dbReference type="GO" id="GO:0044205">
    <property type="term" value="P:'de novo' UMP biosynthetic process"/>
    <property type="evidence" value="ECO:0007669"/>
    <property type="project" value="UniProtKB-UniRule"/>
</dbReference>
<dbReference type="GO" id="GO:0006541">
    <property type="term" value="P:glutamine metabolic process"/>
    <property type="evidence" value="ECO:0000318"/>
    <property type="project" value="GO_Central"/>
</dbReference>
<dbReference type="GO" id="GO:0006526">
    <property type="term" value="P:L-arginine biosynthetic process"/>
    <property type="evidence" value="ECO:0007669"/>
    <property type="project" value="UniProtKB-UniRule"/>
</dbReference>
<dbReference type="CDD" id="cd01424">
    <property type="entry name" value="MGS_CPS_II"/>
    <property type="match status" value="1"/>
</dbReference>
<dbReference type="FunFam" id="1.10.1030.10:FF:000002">
    <property type="entry name" value="Carbamoyl-phosphate synthase large chain"/>
    <property type="match status" value="1"/>
</dbReference>
<dbReference type="FunFam" id="3.30.1490.20:FF:000001">
    <property type="entry name" value="Carbamoyl-phosphate synthase large chain"/>
    <property type="match status" value="1"/>
</dbReference>
<dbReference type="FunFam" id="3.30.470.20:FF:000001">
    <property type="entry name" value="Carbamoyl-phosphate synthase large chain"/>
    <property type="match status" value="1"/>
</dbReference>
<dbReference type="FunFam" id="3.30.470.20:FF:000026">
    <property type="entry name" value="Carbamoyl-phosphate synthase large chain"/>
    <property type="match status" value="1"/>
</dbReference>
<dbReference type="FunFam" id="3.40.50.1380:FF:000011">
    <property type="entry name" value="Carbamoyl-phosphate synthase large chain"/>
    <property type="match status" value="1"/>
</dbReference>
<dbReference type="FunFam" id="3.40.50.20:FF:000001">
    <property type="entry name" value="Carbamoyl-phosphate synthase large chain"/>
    <property type="match status" value="2"/>
</dbReference>
<dbReference type="Gene3D" id="3.40.50.20">
    <property type="match status" value="2"/>
</dbReference>
<dbReference type="Gene3D" id="3.30.1490.20">
    <property type="entry name" value="ATP-grasp fold, A domain"/>
    <property type="match status" value="1"/>
</dbReference>
<dbReference type="Gene3D" id="3.30.470.20">
    <property type="entry name" value="ATP-grasp fold, B domain"/>
    <property type="match status" value="2"/>
</dbReference>
<dbReference type="Gene3D" id="1.10.1030.10">
    <property type="entry name" value="Carbamoyl-phosphate synthetase, large subunit oligomerisation domain"/>
    <property type="match status" value="1"/>
</dbReference>
<dbReference type="Gene3D" id="3.40.50.1380">
    <property type="entry name" value="Methylglyoxal synthase-like domain"/>
    <property type="match status" value="1"/>
</dbReference>
<dbReference type="HAMAP" id="MF_01210_A">
    <property type="entry name" value="CPSase_L_chain_A"/>
    <property type="match status" value="1"/>
</dbReference>
<dbReference type="HAMAP" id="MF_01210_B">
    <property type="entry name" value="CPSase_L_chain_B"/>
    <property type="match status" value="1"/>
</dbReference>
<dbReference type="InterPro" id="IPR011761">
    <property type="entry name" value="ATP-grasp"/>
</dbReference>
<dbReference type="InterPro" id="IPR013815">
    <property type="entry name" value="ATP_grasp_subdomain_1"/>
</dbReference>
<dbReference type="InterPro" id="IPR006275">
    <property type="entry name" value="CarbamoylP_synth_lsu"/>
</dbReference>
<dbReference type="InterPro" id="IPR005480">
    <property type="entry name" value="CarbamoylP_synth_lsu_oligo"/>
</dbReference>
<dbReference type="InterPro" id="IPR036897">
    <property type="entry name" value="CarbamoylP_synth_lsu_oligo_sf"/>
</dbReference>
<dbReference type="InterPro" id="IPR005479">
    <property type="entry name" value="CbamoylP_synth_lsu-like_ATP-bd"/>
</dbReference>
<dbReference type="InterPro" id="IPR005483">
    <property type="entry name" value="CbamoylP_synth_lsu_CPSase_dom"/>
</dbReference>
<dbReference type="InterPro" id="IPR011607">
    <property type="entry name" value="MGS-like_dom"/>
</dbReference>
<dbReference type="InterPro" id="IPR036914">
    <property type="entry name" value="MGS-like_dom_sf"/>
</dbReference>
<dbReference type="InterPro" id="IPR033937">
    <property type="entry name" value="MGS_CPS_CarB"/>
</dbReference>
<dbReference type="InterPro" id="IPR016185">
    <property type="entry name" value="PreATP-grasp_dom_sf"/>
</dbReference>
<dbReference type="NCBIfam" id="TIGR01369">
    <property type="entry name" value="CPSaseII_lrg"/>
    <property type="match status" value="1"/>
</dbReference>
<dbReference type="NCBIfam" id="NF003671">
    <property type="entry name" value="PRK05294.1"/>
    <property type="match status" value="1"/>
</dbReference>
<dbReference type="NCBIfam" id="NF009455">
    <property type="entry name" value="PRK12815.1"/>
    <property type="match status" value="1"/>
</dbReference>
<dbReference type="PANTHER" id="PTHR11405:SF53">
    <property type="entry name" value="CARBAMOYL-PHOSPHATE SYNTHASE [AMMONIA], MITOCHONDRIAL"/>
    <property type="match status" value="1"/>
</dbReference>
<dbReference type="PANTHER" id="PTHR11405">
    <property type="entry name" value="CARBAMOYLTRANSFERASE FAMILY MEMBER"/>
    <property type="match status" value="1"/>
</dbReference>
<dbReference type="Pfam" id="PF02786">
    <property type="entry name" value="CPSase_L_D2"/>
    <property type="match status" value="2"/>
</dbReference>
<dbReference type="Pfam" id="PF02787">
    <property type="entry name" value="CPSase_L_D3"/>
    <property type="match status" value="1"/>
</dbReference>
<dbReference type="Pfam" id="PF02142">
    <property type="entry name" value="MGS"/>
    <property type="match status" value="1"/>
</dbReference>
<dbReference type="PRINTS" id="PR00098">
    <property type="entry name" value="CPSASE"/>
</dbReference>
<dbReference type="SMART" id="SM01096">
    <property type="entry name" value="CPSase_L_D3"/>
    <property type="match status" value="1"/>
</dbReference>
<dbReference type="SMART" id="SM01209">
    <property type="entry name" value="GARS_A"/>
    <property type="match status" value="1"/>
</dbReference>
<dbReference type="SMART" id="SM00851">
    <property type="entry name" value="MGS"/>
    <property type="match status" value="1"/>
</dbReference>
<dbReference type="SUPFAM" id="SSF48108">
    <property type="entry name" value="Carbamoyl phosphate synthetase, large subunit connection domain"/>
    <property type="match status" value="1"/>
</dbReference>
<dbReference type="SUPFAM" id="SSF56059">
    <property type="entry name" value="Glutathione synthetase ATP-binding domain-like"/>
    <property type="match status" value="2"/>
</dbReference>
<dbReference type="SUPFAM" id="SSF52335">
    <property type="entry name" value="Methylglyoxal synthase-like"/>
    <property type="match status" value="1"/>
</dbReference>
<dbReference type="SUPFAM" id="SSF52440">
    <property type="entry name" value="PreATP-grasp domain"/>
    <property type="match status" value="2"/>
</dbReference>
<dbReference type="PROSITE" id="PS50975">
    <property type="entry name" value="ATP_GRASP"/>
    <property type="match status" value="2"/>
</dbReference>
<dbReference type="PROSITE" id="PS00866">
    <property type="entry name" value="CPSASE_1"/>
    <property type="match status" value="2"/>
</dbReference>
<dbReference type="PROSITE" id="PS00867">
    <property type="entry name" value="CPSASE_2"/>
    <property type="match status" value="2"/>
</dbReference>
<dbReference type="PROSITE" id="PS51855">
    <property type="entry name" value="MGS"/>
    <property type="match status" value="1"/>
</dbReference>
<proteinExistence type="inferred from homology"/>
<organism>
    <name type="scientific">Bacillus cereus (strain ATCC 14579 / DSM 31 / CCUG 7414 / JCM 2152 / NBRC 15305 / NCIMB 9373 / NCTC 2599 / NRRL B-3711)</name>
    <dbReference type="NCBI Taxonomy" id="226900"/>
    <lineage>
        <taxon>Bacteria</taxon>
        <taxon>Bacillati</taxon>
        <taxon>Bacillota</taxon>
        <taxon>Bacilli</taxon>
        <taxon>Bacillales</taxon>
        <taxon>Bacillaceae</taxon>
        <taxon>Bacillus</taxon>
        <taxon>Bacillus cereus group</taxon>
    </lineage>
</organism>
<protein>
    <recommendedName>
        <fullName evidence="1">Carbamoyl phosphate synthase large chain</fullName>
        <ecNumber evidence="1">6.3.4.16</ecNumber>
        <ecNumber evidence="1">6.3.5.5</ecNumber>
    </recommendedName>
    <alternativeName>
        <fullName evidence="1">Carbamoyl phosphate synthetase ammonia chain</fullName>
    </alternativeName>
</protein>
<comment type="function">
    <text evidence="1">Large subunit of the glutamine-dependent carbamoyl phosphate synthetase (CPSase). CPSase catalyzes the formation of carbamoyl phosphate from the ammonia moiety of glutamine, carbonate, and phosphate donated by ATP, constituting the first step of 2 biosynthetic pathways, one leading to arginine and/or urea and the other to pyrimidine nucleotides. The large subunit (synthetase) binds the substrates ammonia (free or transferred from glutamine from the small subunit), hydrogencarbonate and ATP and carries out an ATP-coupled ligase reaction, activating hydrogencarbonate by forming carboxy phosphate which reacts with ammonia to form carbamoyl phosphate.</text>
</comment>
<comment type="catalytic activity">
    <reaction evidence="1">
        <text>hydrogencarbonate + L-glutamine + 2 ATP + H2O = carbamoyl phosphate + L-glutamate + 2 ADP + phosphate + 2 H(+)</text>
        <dbReference type="Rhea" id="RHEA:18633"/>
        <dbReference type="ChEBI" id="CHEBI:15377"/>
        <dbReference type="ChEBI" id="CHEBI:15378"/>
        <dbReference type="ChEBI" id="CHEBI:17544"/>
        <dbReference type="ChEBI" id="CHEBI:29985"/>
        <dbReference type="ChEBI" id="CHEBI:30616"/>
        <dbReference type="ChEBI" id="CHEBI:43474"/>
        <dbReference type="ChEBI" id="CHEBI:58228"/>
        <dbReference type="ChEBI" id="CHEBI:58359"/>
        <dbReference type="ChEBI" id="CHEBI:456216"/>
        <dbReference type="EC" id="6.3.5.5"/>
    </reaction>
</comment>
<comment type="catalytic activity">
    <molecule>Carbamoyl phosphate synthase large chain</molecule>
    <reaction evidence="1">
        <text>hydrogencarbonate + NH4(+) + 2 ATP = carbamoyl phosphate + 2 ADP + phosphate + 2 H(+)</text>
        <dbReference type="Rhea" id="RHEA:18029"/>
        <dbReference type="ChEBI" id="CHEBI:15378"/>
        <dbReference type="ChEBI" id="CHEBI:17544"/>
        <dbReference type="ChEBI" id="CHEBI:28938"/>
        <dbReference type="ChEBI" id="CHEBI:30616"/>
        <dbReference type="ChEBI" id="CHEBI:43474"/>
        <dbReference type="ChEBI" id="CHEBI:58228"/>
        <dbReference type="ChEBI" id="CHEBI:456216"/>
        <dbReference type="EC" id="6.3.4.16"/>
    </reaction>
</comment>
<comment type="cofactor">
    <cofactor evidence="1">
        <name>Mg(2+)</name>
        <dbReference type="ChEBI" id="CHEBI:18420"/>
    </cofactor>
    <cofactor evidence="1">
        <name>Mn(2+)</name>
        <dbReference type="ChEBI" id="CHEBI:29035"/>
    </cofactor>
    <text evidence="1">Binds 4 Mg(2+) or Mn(2+) ions per subunit.</text>
</comment>
<comment type="pathway">
    <text evidence="1">Amino-acid biosynthesis; L-arginine biosynthesis; carbamoyl phosphate from bicarbonate: step 1/1.</text>
</comment>
<comment type="pathway">
    <text evidence="1">Pyrimidine metabolism; UMP biosynthesis via de novo pathway; (S)-dihydroorotate from bicarbonate: step 1/3.</text>
</comment>
<comment type="subunit">
    <text evidence="1">Composed of two chains; the small (or glutamine) chain promotes the hydrolysis of glutamine to ammonia, which is used by the large (or ammonia) chain to synthesize carbamoyl phosphate. Tetramer of heterodimers (alpha,beta)4.</text>
</comment>
<comment type="domain">
    <text evidence="1">The large subunit is composed of 2 ATP-grasp domains that are involved in binding the 2 ATP molecules needed for carbamoyl phosphate synthesis. The N-terminal ATP-grasp domain (referred to as the carboxyphosphate synthetic component) catalyzes the ATP-dependent phosphorylation of hydrogencarbonate to carboxyphosphate and the subsequent nucleophilic attack by ammonia to form a carbamate intermediate. The C-terminal ATP-grasp domain (referred to as the carbamoyl phosphate synthetic component) then catalyzes the phosphorylation of carbamate with the second ATP to form the end product carbamoyl phosphate. The reactive and unstable enzyme intermediates are sequentially channeled from one active site to the next through the interior of the protein over a distance of at least 96 A.</text>
</comment>
<comment type="similarity">
    <text evidence="1">Belongs to the CarB family.</text>
</comment>